<accession>Q8XHR7</accession>
<comment type="function">
    <text evidence="1">Forms part of the ribosomal stalk which helps the ribosome interact with GTP-bound translation factors. Is thus essential for accurate translation.</text>
</comment>
<comment type="subunit">
    <text evidence="1">Homodimer. Part of the ribosomal stalk of the 50S ribosomal subunit. Forms a multimeric L10(L12)X complex, where L10 forms an elongated spine to which 2 to 4 L12 dimers bind in a sequential fashion. Binds GTP-bound translation factors.</text>
</comment>
<comment type="similarity">
    <text evidence="1">Belongs to the bacterial ribosomal protein bL12 family.</text>
</comment>
<keyword id="KW-1185">Reference proteome</keyword>
<keyword id="KW-0687">Ribonucleoprotein</keyword>
<keyword id="KW-0689">Ribosomal protein</keyword>
<gene>
    <name evidence="1" type="primary">rplL</name>
    <name type="ordered locus">CPE2414</name>
</gene>
<proteinExistence type="inferred from homology"/>
<reference key="1">
    <citation type="journal article" date="2002" name="Proc. Natl. Acad. Sci. U.S.A.">
        <title>Complete genome sequence of Clostridium perfringens, an anaerobic flesh-eater.</title>
        <authorList>
            <person name="Shimizu T."/>
            <person name="Ohtani K."/>
            <person name="Hirakawa H."/>
            <person name="Ohshima K."/>
            <person name="Yamashita A."/>
            <person name="Shiba T."/>
            <person name="Ogasawara N."/>
            <person name="Hattori M."/>
            <person name="Kuhara S."/>
            <person name="Hayashi H."/>
        </authorList>
    </citation>
    <scope>NUCLEOTIDE SEQUENCE [LARGE SCALE GENOMIC DNA]</scope>
    <source>
        <strain>13 / Type A</strain>
    </source>
</reference>
<name>RL7_CLOPE</name>
<evidence type="ECO:0000255" key="1">
    <source>
        <dbReference type="HAMAP-Rule" id="MF_00368"/>
    </source>
</evidence>
<evidence type="ECO:0000305" key="2"/>
<feature type="chain" id="PRO_0000157523" description="Large ribosomal subunit protein bL12">
    <location>
        <begin position="1"/>
        <end position="121"/>
    </location>
</feature>
<sequence length="121" mass="12536">MTKEQIIGALKEMSVLELNEVVKACEEEFGVSAAAPVAVVGGAAAGAAAEEKSEFDVVLTNAGANKIKVIKAVRELTGLGLKEAKEIVDGAPKTLKEAVAKEEAEDMKAKLAEVGAEVELK</sequence>
<dbReference type="EMBL" id="BA000016">
    <property type="protein sequence ID" value="BAB82120.1"/>
    <property type="molecule type" value="Genomic_DNA"/>
</dbReference>
<dbReference type="RefSeq" id="WP_011010905.1">
    <property type="nucleotide sequence ID" value="NC_003366.1"/>
</dbReference>
<dbReference type="SMR" id="Q8XHR7"/>
<dbReference type="STRING" id="195102.gene:10491731"/>
<dbReference type="KEGG" id="cpe:CPE2414"/>
<dbReference type="HOGENOM" id="CLU_086499_3_2_9"/>
<dbReference type="Proteomes" id="UP000000818">
    <property type="component" value="Chromosome"/>
</dbReference>
<dbReference type="GO" id="GO:0022625">
    <property type="term" value="C:cytosolic large ribosomal subunit"/>
    <property type="evidence" value="ECO:0007669"/>
    <property type="project" value="TreeGrafter"/>
</dbReference>
<dbReference type="GO" id="GO:0003729">
    <property type="term" value="F:mRNA binding"/>
    <property type="evidence" value="ECO:0007669"/>
    <property type="project" value="TreeGrafter"/>
</dbReference>
<dbReference type="GO" id="GO:0003735">
    <property type="term" value="F:structural constituent of ribosome"/>
    <property type="evidence" value="ECO:0007669"/>
    <property type="project" value="InterPro"/>
</dbReference>
<dbReference type="GO" id="GO:0006412">
    <property type="term" value="P:translation"/>
    <property type="evidence" value="ECO:0007669"/>
    <property type="project" value="UniProtKB-UniRule"/>
</dbReference>
<dbReference type="CDD" id="cd00387">
    <property type="entry name" value="Ribosomal_L7_L12"/>
    <property type="match status" value="1"/>
</dbReference>
<dbReference type="FunFam" id="1.20.5.710:FF:000002">
    <property type="entry name" value="50S ribosomal protein L7/L12"/>
    <property type="match status" value="1"/>
</dbReference>
<dbReference type="FunFam" id="3.30.1390.10:FF:000001">
    <property type="entry name" value="50S ribosomal protein L7/L12"/>
    <property type="match status" value="1"/>
</dbReference>
<dbReference type="Gene3D" id="3.30.1390.10">
    <property type="match status" value="1"/>
</dbReference>
<dbReference type="Gene3D" id="1.20.5.710">
    <property type="entry name" value="Single helix bin"/>
    <property type="match status" value="1"/>
</dbReference>
<dbReference type="HAMAP" id="MF_00368">
    <property type="entry name" value="Ribosomal_bL12"/>
    <property type="match status" value="1"/>
</dbReference>
<dbReference type="InterPro" id="IPR000206">
    <property type="entry name" value="Ribosomal_bL12"/>
</dbReference>
<dbReference type="InterPro" id="IPR013823">
    <property type="entry name" value="Ribosomal_bL12_C"/>
</dbReference>
<dbReference type="InterPro" id="IPR014719">
    <property type="entry name" value="Ribosomal_bL12_C/ClpS-like"/>
</dbReference>
<dbReference type="InterPro" id="IPR008932">
    <property type="entry name" value="Ribosomal_bL12_oligo"/>
</dbReference>
<dbReference type="InterPro" id="IPR036235">
    <property type="entry name" value="Ribosomal_bL12_oligo_N_sf"/>
</dbReference>
<dbReference type="NCBIfam" id="TIGR00855">
    <property type="entry name" value="L12"/>
    <property type="match status" value="1"/>
</dbReference>
<dbReference type="PANTHER" id="PTHR45987">
    <property type="entry name" value="39S RIBOSOMAL PROTEIN L12"/>
    <property type="match status" value="1"/>
</dbReference>
<dbReference type="PANTHER" id="PTHR45987:SF4">
    <property type="entry name" value="LARGE RIBOSOMAL SUBUNIT PROTEIN BL12M"/>
    <property type="match status" value="1"/>
</dbReference>
<dbReference type="Pfam" id="PF00542">
    <property type="entry name" value="Ribosomal_L12"/>
    <property type="match status" value="1"/>
</dbReference>
<dbReference type="Pfam" id="PF16320">
    <property type="entry name" value="Ribosomal_L12_N"/>
    <property type="match status" value="1"/>
</dbReference>
<dbReference type="SUPFAM" id="SSF54736">
    <property type="entry name" value="ClpS-like"/>
    <property type="match status" value="1"/>
</dbReference>
<dbReference type="SUPFAM" id="SSF48300">
    <property type="entry name" value="Ribosomal protein L7/12, oligomerisation (N-terminal) domain"/>
    <property type="match status" value="1"/>
</dbReference>
<protein>
    <recommendedName>
        <fullName evidence="1">Large ribosomal subunit protein bL12</fullName>
    </recommendedName>
    <alternativeName>
        <fullName evidence="2">50S ribosomal protein L7/L12</fullName>
    </alternativeName>
</protein>
<organism>
    <name type="scientific">Clostridium perfringens (strain 13 / Type A)</name>
    <dbReference type="NCBI Taxonomy" id="195102"/>
    <lineage>
        <taxon>Bacteria</taxon>
        <taxon>Bacillati</taxon>
        <taxon>Bacillota</taxon>
        <taxon>Clostridia</taxon>
        <taxon>Eubacteriales</taxon>
        <taxon>Clostridiaceae</taxon>
        <taxon>Clostridium</taxon>
    </lineage>
</organism>